<dbReference type="EMBL" id="CP000086">
    <property type="protein sequence ID" value="ABC39011.1"/>
    <property type="molecule type" value="Genomic_DNA"/>
</dbReference>
<dbReference type="RefSeq" id="WP_009890444.1">
    <property type="nucleotide sequence ID" value="NZ_CP008785.1"/>
</dbReference>
<dbReference type="SMR" id="Q2SWZ5"/>
<dbReference type="GeneID" id="45121758"/>
<dbReference type="KEGG" id="bte:BTH_I2030"/>
<dbReference type="HOGENOM" id="CLU_073981_2_1_4"/>
<dbReference type="Proteomes" id="UP000001930">
    <property type="component" value="Chromosome I"/>
</dbReference>
<dbReference type="GO" id="GO:0005829">
    <property type="term" value="C:cytosol"/>
    <property type="evidence" value="ECO:0007669"/>
    <property type="project" value="GOC"/>
</dbReference>
<dbReference type="GO" id="GO:0043023">
    <property type="term" value="F:ribosomal large subunit binding"/>
    <property type="evidence" value="ECO:0007669"/>
    <property type="project" value="TreeGrafter"/>
</dbReference>
<dbReference type="GO" id="GO:0002184">
    <property type="term" value="P:cytoplasmic translational termination"/>
    <property type="evidence" value="ECO:0007669"/>
    <property type="project" value="TreeGrafter"/>
</dbReference>
<dbReference type="CDD" id="cd00520">
    <property type="entry name" value="RRF"/>
    <property type="match status" value="1"/>
</dbReference>
<dbReference type="FunFam" id="1.10.132.20:FF:000001">
    <property type="entry name" value="Ribosome-recycling factor"/>
    <property type="match status" value="1"/>
</dbReference>
<dbReference type="FunFam" id="3.30.1360.40:FF:000001">
    <property type="entry name" value="Ribosome-recycling factor"/>
    <property type="match status" value="1"/>
</dbReference>
<dbReference type="Gene3D" id="3.30.1360.40">
    <property type="match status" value="1"/>
</dbReference>
<dbReference type="Gene3D" id="1.10.132.20">
    <property type="entry name" value="Ribosome-recycling factor"/>
    <property type="match status" value="1"/>
</dbReference>
<dbReference type="HAMAP" id="MF_00040">
    <property type="entry name" value="RRF"/>
    <property type="match status" value="1"/>
</dbReference>
<dbReference type="InterPro" id="IPR002661">
    <property type="entry name" value="Ribosome_recyc_fac"/>
</dbReference>
<dbReference type="InterPro" id="IPR023584">
    <property type="entry name" value="Ribosome_recyc_fac_dom"/>
</dbReference>
<dbReference type="InterPro" id="IPR036191">
    <property type="entry name" value="RRF_sf"/>
</dbReference>
<dbReference type="NCBIfam" id="TIGR00496">
    <property type="entry name" value="frr"/>
    <property type="match status" value="1"/>
</dbReference>
<dbReference type="PANTHER" id="PTHR20982:SF3">
    <property type="entry name" value="MITOCHONDRIAL RIBOSOME RECYCLING FACTOR PSEUDO 1"/>
    <property type="match status" value="1"/>
</dbReference>
<dbReference type="PANTHER" id="PTHR20982">
    <property type="entry name" value="RIBOSOME RECYCLING FACTOR"/>
    <property type="match status" value="1"/>
</dbReference>
<dbReference type="Pfam" id="PF01765">
    <property type="entry name" value="RRF"/>
    <property type="match status" value="1"/>
</dbReference>
<dbReference type="SUPFAM" id="SSF55194">
    <property type="entry name" value="Ribosome recycling factor, RRF"/>
    <property type="match status" value="1"/>
</dbReference>
<evidence type="ECO:0000255" key="1">
    <source>
        <dbReference type="HAMAP-Rule" id="MF_00040"/>
    </source>
</evidence>
<reference key="1">
    <citation type="journal article" date="2005" name="BMC Genomics">
        <title>Bacterial genome adaptation to niches: divergence of the potential virulence genes in three Burkholderia species of different survival strategies.</title>
        <authorList>
            <person name="Kim H.S."/>
            <person name="Schell M.A."/>
            <person name="Yu Y."/>
            <person name="Ulrich R.L."/>
            <person name="Sarria S.H."/>
            <person name="Nierman W.C."/>
            <person name="DeShazer D."/>
        </authorList>
    </citation>
    <scope>NUCLEOTIDE SEQUENCE [LARGE SCALE GENOMIC DNA]</scope>
    <source>
        <strain>ATCC 700388 / DSM 13276 / CCUG 48851 / CIP 106301 / E264</strain>
    </source>
</reference>
<name>RRF_BURTA</name>
<keyword id="KW-0963">Cytoplasm</keyword>
<keyword id="KW-0648">Protein biosynthesis</keyword>
<comment type="function">
    <text evidence="1">Responsible for the release of ribosomes from messenger RNA at the termination of protein biosynthesis. May increase the efficiency of translation by recycling ribosomes from one round of translation to another.</text>
</comment>
<comment type="subcellular location">
    <subcellularLocation>
        <location evidence="1">Cytoplasm</location>
    </subcellularLocation>
</comment>
<comment type="similarity">
    <text evidence="1">Belongs to the RRF family.</text>
</comment>
<protein>
    <recommendedName>
        <fullName evidence="1">Ribosome-recycling factor</fullName>
        <shortName evidence="1">RRF</shortName>
    </recommendedName>
    <alternativeName>
        <fullName evidence="1">Ribosome-releasing factor</fullName>
    </alternativeName>
</protein>
<proteinExistence type="inferred from homology"/>
<accession>Q2SWZ5</accession>
<sequence length="186" mass="20810">MSVADIKKGVEQKMQRSIEAFKNDLAKIRTGRAHTGLLDHVQVDYYGSMVPISQVANLTLVDARTIGVQPWEKNMVAKVEKAIREADLGLNPATAGDLIRVPMPALTEERRRELTKVVKGEGETAKVAVRNLRRDANEQLKKLVKDKEISEDDERRAGDDVQKLTDKHVAEIDKLVQSKEAEIMTV</sequence>
<feature type="chain" id="PRO_1000003125" description="Ribosome-recycling factor">
    <location>
        <begin position="1"/>
        <end position="186"/>
    </location>
</feature>
<gene>
    <name evidence="1" type="primary">frr</name>
    <name type="ordered locus">BTH_I2030</name>
</gene>
<organism>
    <name type="scientific">Burkholderia thailandensis (strain ATCC 700388 / DSM 13276 / CCUG 48851 / CIP 106301 / E264)</name>
    <dbReference type="NCBI Taxonomy" id="271848"/>
    <lineage>
        <taxon>Bacteria</taxon>
        <taxon>Pseudomonadati</taxon>
        <taxon>Pseudomonadota</taxon>
        <taxon>Betaproteobacteria</taxon>
        <taxon>Burkholderiales</taxon>
        <taxon>Burkholderiaceae</taxon>
        <taxon>Burkholderia</taxon>
        <taxon>pseudomallei group</taxon>
    </lineage>
</organism>